<name>RL28_CYTH3</name>
<accession>Q11XD1</accession>
<reference key="1">
    <citation type="journal article" date="2007" name="Appl. Environ. Microbiol.">
        <title>Genome sequence of the cellulolytic gliding bacterium Cytophaga hutchinsonii.</title>
        <authorList>
            <person name="Xie G."/>
            <person name="Bruce D.C."/>
            <person name="Challacombe J.F."/>
            <person name="Chertkov O."/>
            <person name="Detter J.C."/>
            <person name="Gilna P."/>
            <person name="Han C.S."/>
            <person name="Lucas S."/>
            <person name="Misra M."/>
            <person name="Myers G.L."/>
            <person name="Richardson P."/>
            <person name="Tapia R."/>
            <person name="Thayer N."/>
            <person name="Thompson L.S."/>
            <person name="Brettin T.S."/>
            <person name="Henrissat B."/>
            <person name="Wilson D.B."/>
            <person name="McBride M.J."/>
        </authorList>
    </citation>
    <scope>NUCLEOTIDE SEQUENCE [LARGE SCALE GENOMIC DNA]</scope>
    <source>
        <strain>ATCC 33406 / DSM 1761 / JCM 20678 / CIP 103989 / IAM 12607 / NBRC 15051 / NCIMB 9469 / D465</strain>
    </source>
</reference>
<comment type="similarity">
    <text evidence="1">Belongs to the bacterial ribosomal protein bL28 family.</text>
</comment>
<feature type="chain" id="PRO_1000007222" description="Large ribosomal subunit protein bL28">
    <location>
        <begin position="1"/>
        <end position="80"/>
    </location>
</feature>
<feature type="region of interest" description="Disordered" evidence="2">
    <location>
        <begin position="1"/>
        <end position="23"/>
    </location>
</feature>
<gene>
    <name evidence="1" type="primary">rpmB</name>
    <name type="ordered locus">CHU_0648</name>
</gene>
<organism>
    <name type="scientific">Cytophaga hutchinsonii (strain ATCC 33406 / DSM 1761 / CIP 103989 / NBRC 15051 / NCIMB 9469 / D465)</name>
    <dbReference type="NCBI Taxonomy" id="269798"/>
    <lineage>
        <taxon>Bacteria</taxon>
        <taxon>Pseudomonadati</taxon>
        <taxon>Bacteroidota</taxon>
        <taxon>Cytophagia</taxon>
        <taxon>Cytophagales</taxon>
        <taxon>Cytophagaceae</taxon>
        <taxon>Cytophaga</taxon>
    </lineage>
</organism>
<protein>
    <recommendedName>
        <fullName evidence="1">Large ribosomal subunit protein bL28</fullName>
    </recommendedName>
    <alternativeName>
        <fullName evidence="3">50S ribosomal protein L28</fullName>
    </alternativeName>
</protein>
<proteinExistence type="inferred from homology"/>
<dbReference type="EMBL" id="CP000383">
    <property type="protein sequence ID" value="ABG57935.1"/>
    <property type="molecule type" value="Genomic_DNA"/>
</dbReference>
<dbReference type="RefSeq" id="WP_011584051.1">
    <property type="nucleotide sequence ID" value="NC_008255.1"/>
</dbReference>
<dbReference type="SMR" id="Q11XD1"/>
<dbReference type="STRING" id="269798.CHU_0648"/>
<dbReference type="KEGG" id="chu:CHU_0648"/>
<dbReference type="eggNOG" id="COG0227">
    <property type="taxonomic scope" value="Bacteria"/>
</dbReference>
<dbReference type="HOGENOM" id="CLU_064548_3_1_10"/>
<dbReference type="OrthoDB" id="9805609at2"/>
<dbReference type="Proteomes" id="UP000001822">
    <property type="component" value="Chromosome"/>
</dbReference>
<dbReference type="GO" id="GO:1990904">
    <property type="term" value="C:ribonucleoprotein complex"/>
    <property type="evidence" value="ECO:0007669"/>
    <property type="project" value="UniProtKB-KW"/>
</dbReference>
<dbReference type="GO" id="GO:0005840">
    <property type="term" value="C:ribosome"/>
    <property type="evidence" value="ECO:0007669"/>
    <property type="project" value="UniProtKB-KW"/>
</dbReference>
<dbReference type="GO" id="GO:0003735">
    <property type="term" value="F:structural constituent of ribosome"/>
    <property type="evidence" value="ECO:0007669"/>
    <property type="project" value="InterPro"/>
</dbReference>
<dbReference type="GO" id="GO:0006412">
    <property type="term" value="P:translation"/>
    <property type="evidence" value="ECO:0007669"/>
    <property type="project" value="UniProtKB-UniRule"/>
</dbReference>
<dbReference type="FunFam" id="2.30.170.40:FF:000001">
    <property type="entry name" value="50S ribosomal protein L28"/>
    <property type="match status" value="1"/>
</dbReference>
<dbReference type="Gene3D" id="2.30.170.40">
    <property type="entry name" value="Ribosomal protein L28/L24"/>
    <property type="match status" value="1"/>
</dbReference>
<dbReference type="HAMAP" id="MF_00373">
    <property type="entry name" value="Ribosomal_bL28"/>
    <property type="match status" value="1"/>
</dbReference>
<dbReference type="InterPro" id="IPR026569">
    <property type="entry name" value="Ribosomal_bL28"/>
</dbReference>
<dbReference type="InterPro" id="IPR034704">
    <property type="entry name" value="Ribosomal_bL28/bL31-like_sf"/>
</dbReference>
<dbReference type="InterPro" id="IPR001383">
    <property type="entry name" value="Ribosomal_bL28_bact-type"/>
</dbReference>
<dbReference type="InterPro" id="IPR037147">
    <property type="entry name" value="Ribosomal_bL28_sf"/>
</dbReference>
<dbReference type="NCBIfam" id="TIGR00009">
    <property type="entry name" value="L28"/>
    <property type="match status" value="1"/>
</dbReference>
<dbReference type="PANTHER" id="PTHR13528">
    <property type="entry name" value="39S RIBOSOMAL PROTEIN L28, MITOCHONDRIAL"/>
    <property type="match status" value="1"/>
</dbReference>
<dbReference type="PANTHER" id="PTHR13528:SF2">
    <property type="entry name" value="LARGE RIBOSOMAL SUBUNIT PROTEIN BL28M"/>
    <property type="match status" value="1"/>
</dbReference>
<dbReference type="Pfam" id="PF00830">
    <property type="entry name" value="Ribosomal_L28"/>
    <property type="match status" value="1"/>
</dbReference>
<dbReference type="SUPFAM" id="SSF143800">
    <property type="entry name" value="L28p-like"/>
    <property type="match status" value="1"/>
</dbReference>
<sequence length="80" mass="8974">MARVCQITGKKTRTGNNVSHANNKTKRTFAPNIQKKRFFLSEENRWVTLKLSTKAIKTISSKGLSAVLEKATAAGYLKKY</sequence>
<evidence type="ECO:0000255" key="1">
    <source>
        <dbReference type="HAMAP-Rule" id="MF_00373"/>
    </source>
</evidence>
<evidence type="ECO:0000256" key="2">
    <source>
        <dbReference type="SAM" id="MobiDB-lite"/>
    </source>
</evidence>
<evidence type="ECO:0000305" key="3"/>
<keyword id="KW-1185">Reference proteome</keyword>
<keyword id="KW-0687">Ribonucleoprotein</keyword>
<keyword id="KW-0689">Ribosomal protein</keyword>